<proteinExistence type="inferred from homology"/>
<sequence length="514" mass="57840">MSNIRHALTVKREDDFAAWYQAVIAEADLAEESGVRGCMVIKPWGYGIWERIQRLLDDRIKATGHENVYFPIFIPLSNFEREAEHVEGFAKEMAVVTHHRLIGDGEGGLIPDPEAKLEEPLVVRPTSETIFGDAMARWIQSWRDLPLLTNQWANVVRWEMRTRMFLRTSEFLWQEGHTAHATAEEAKEHTLTMLEVYRAHAEEDLALPVIAGEKPENERFPGAVETWSIEAMMQDGKALQAGTSHYLGTNFSEAANIKFQDREGGEKYCHTTSWGVSTRMIGGVIMTHGDDDGLKVPPRIAPYQVVILPMLRDKPEDDALLAYCEDLRGKLITESAMGEPVRVLLDKKPGKAAAKRWNWVRKGAPIVIEVGGRDMENGVVSLLRRDELWNEETGKPAFQAPTPAQLTDEIASMLDSIQAGMFGTAQTWRNANVMSGCTSFEQLRDHYSDGKKHVGWVEVQWSKPTGQELEKVVEKLKDLKLTIRNVPMDTPAPTGSCIFTGKPAVEWIYVAKAY</sequence>
<evidence type="ECO:0000255" key="1">
    <source>
        <dbReference type="HAMAP-Rule" id="MF_01571"/>
    </source>
</evidence>
<dbReference type="EC" id="6.1.1.15" evidence="1"/>
<dbReference type="EMBL" id="CP000157">
    <property type="protein sequence ID" value="ABC63313.1"/>
    <property type="molecule type" value="Genomic_DNA"/>
</dbReference>
<dbReference type="RefSeq" id="WP_011414149.1">
    <property type="nucleotide sequence ID" value="NC_007722.1"/>
</dbReference>
<dbReference type="SMR" id="Q2NAH8"/>
<dbReference type="STRING" id="314225.ELI_06105"/>
<dbReference type="KEGG" id="eli:ELI_06105"/>
<dbReference type="eggNOG" id="COG0442">
    <property type="taxonomic scope" value="Bacteria"/>
</dbReference>
<dbReference type="HOGENOM" id="CLU_001882_4_2_5"/>
<dbReference type="OrthoDB" id="9809052at2"/>
<dbReference type="Proteomes" id="UP000008808">
    <property type="component" value="Chromosome"/>
</dbReference>
<dbReference type="GO" id="GO:0017101">
    <property type="term" value="C:aminoacyl-tRNA synthetase multienzyme complex"/>
    <property type="evidence" value="ECO:0007669"/>
    <property type="project" value="TreeGrafter"/>
</dbReference>
<dbReference type="GO" id="GO:0005737">
    <property type="term" value="C:cytoplasm"/>
    <property type="evidence" value="ECO:0007669"/>
    <property type="project" value="UniProtKB-SubCell"/>
</dbReference>
<dbReference type="GO" id="GO:0005524">
    <property type="term" value="F:ATP binding"/>
    <property type="evidence" value="ECO:0007669"/>
    <property type="project" value="UniProtKB-UniRule"/>
</dbReference>
<dbReference type="GO" id="GO:0004827">
    <property type="term" value="F:proline-tRNA ligase activity"/>
    <property type="evidence" value="ECO:0007669"/>
    <property type="project" value="UniProtKB-UniRule"/>
</dbReference>
<dbReference type="GO" id="GO:0006433">
    <property type="term" value="P:prolyl-tRNA aminoacylation"/>
    <property type="evidence" value="ECO:0007669"/>
    <property type="project" value="UniProtKB-UniRule"/>
</dbReference>
<dbReference type="CDD" id="cd00778">
    <property type="entry name" value="ProRS_core_arch_euk"/>
    <property type="match status" value="1"/>
</dbReference>
<dbReference type="FunFam" id="3.30.930.10:FF:000037">
    <property type="entry name" value="Proline--tRNA ligase"/>
    <property type="match status" value="1"/>
</dbReference>
<dbReference type="Gene3D" id="3.40.50.800">
    <property type="entry name" value="Anticodon-binding domain"/>
    <property type="match status" value="1"/>
</dbReference>
<dbReference type="Gene3D" id="3.30.930.10">
    <property type="entry name" value="Bira Bifunctional Protein, Domain 2"/>
    <property type="match status" value="1"/>
</dbReference>
<dbReference type="Gene3D" id="3.30.110.30">
    <property type="entry name" value="C-terminal domain of ProRS"/>
    <property type="match status" value="1"/>
</dbReference>
<dbReference type="HAMAP" id="MF_01571">
    <property type="entry name" value="Pro_tRNA_synth_type3"/>
    <property type="match status" value="1"/>
</dbReference>
<dbReference type="InterPro" id="IPR002314">
    <property type="entry name" value="aa-tRNA-synt_IIb"/>
</dbReference>
<dbReference type="InterPro" id="IPR006195">
    <property type="entry name" value="aa-tRNA-synth_II"/>
</dbReference>
<dbReference type="InterPro" id="IPR045864">
    <property type="entry name" value="aa-tRNA-synth_II/BPL/LPL"/>
</dbReference>
<dbReference type="InterPro" id="IPR004154">
    <property type="entry name" value="Anticodon-bd"/>
</dbReference>
<dbReference type="InterPro" id="IPR036621">
    <property type="entry name" value="Anticodon-bd_dom_sf"/>
</dbReference>
<dbReference type="InterPro" id="IPR004499">
    <property type="entry name" value="Pro-tRNA-ligase_IIa_arc-type"/>
</dbReference>
<dbReference type="InterPro" id="IPR016061">
    <property type="entry name" value="Pro-tRNA_ligase_II_C"/>
</dbReference>
<dbReference type="InterPro" id="IPR017449">
    <property type="entry name" value="Pro-tRNA_synth_II"/>
</dbReference>
<dbReference type="InterPro" id="IPR033721">
    <property type="entry name" value="ProRS_core_arch_euk"/>
</dbReference>
<dbReference type="NCBIfam" id="TIGR00408">
    <property type="entry name" value="proS_fam_I"/>
    <property type="match status" value="1"/>
</dbReference>
<dbReference type="PANTHER" id="PTHR43382:SF2">
    <property type="entry name" value="BIFUNCTIONAL GLUTAMATE_PROLINE--TRNA LIGASE"/>
    <property type="match status" value="1"/>
</dbReference>
<dbReference type="PANTHER" id="PTHR43382">
    <property type="entry name" value="PROLYL-TRNA SYNTHETASE"/>
    <property type="match status" value="1"/>
</dbReference>
<dbReference type="Pfam" id="PF03129">
    <property type="entry name" value="HGTP_anticodon"/>
    <property type="match status" value="1"/>
</dbReference>
<dbReference type="Pfam" id="PF00587">
    <property type="entry name" value="tRNA-synt_2b"/>
    <property type="match status" value="1"/>
</dbReference>
<dbReference type="SMART" id="SM00946">
    <property type="entry name" value="ProRS-C_1"/>
    <property type="match status" value="1"/>
</dbReference>
<dbReference type="SUPFAM" id="SSF64586">
    <property type="entry name" value="C-terminal domain of ProRS"/>
    <property type="match status" value="1"/>
</dbReference>
<dbReference type="SUPFAM" id="SSF52954">
    <property type="entry name" value="Class II aaRS ABD-related"/>
    <property type="match status" value="1"/>
</dbReference>
<dbReference type="SUPFAM" id="SSF55681">
    <property type="entry name" value="Class II aaRS and biotin synthetases"/>
    <property type="match status" value="1"/>
</dbReference>
<dbReference type="PROSITE" id="PS50862">
    <property type="entry name" value="AA_TRNA_LIGASE_II"/>
    <property type="match status" value="1"/>
</dbReference>
<comment type="function">
    <text evidence="1">Catalyzes the attachment of proline to tRNA(Pro) in a two-step reaction: proline is first activated by ATP to form Pro-AMP and then transferred to the acceptor end of tRNA(Pro).</text>
</comment>
<comment type="catalytic activity">
    <reaction evidence="1">
        <text>tRNA(Pro) + L-proline + ATP = L-prolyl-tRNA(Pro) + AMP + diphosphate</text>
        <dbReference type="Rhea" id="RHEA:14305"/>
        <dbReference type="Rhea" id="RHEA-COMP:9700"/>
        <dbReference type="Rhea" id="RHEA-COMP:9702"/>
        <dbReference type="ChEBI" id="CHEBI:30616"/>
        <dbReference type="ChEBI" id="CHEBI:33019"/>
        <dbReference type="ChEBI" id="CHEBI:60039"/>
        <dbReference type="ChEBI" id="CHEBI:78442"/>
        <dbReference type="ChEBI" id="CHEBI:78532"/>
        <dbReference type="ChEBI" id="CHEBI:456215"/>
        <dbReference type="EC" id="6.1.1.15"/>
    </reaction>
</comment>
<comment type="subunit">
    <text evidence="1">Homodimer.</text>
</comment>
<comment type="subcellular location">
    <subcellularLocation>
        <location evidence="1">Cytoplasm</location>
    </subcellularLocation>
</comment>
<comment type="domain">
    <text evidence="1">Consists of three domains: the N-terminal catalytic domain, the anticodon-binding domain and the C-terminal extension.</text>
</comment>
<comment type="similarity">
    <text evidence="1">Belongs to the class-II aminoacyl-tRNA synthetase family. ProS type 3 subfamily.</text>
</comment>
<gene>
    <name evidence="1" type="primary">proS</name>
    <name type="ordered locus">ELI_06105</name>
</gene>
<reference key="1">
    <citation type="journal article" date="2009" name="J. Bacteriol.">
        <title>Complete genome sequence of Erythrobacter litoralis HTCC2594.</title>
        <authorList>
            <person name="Oh H.M."/>
            <person name="Giovannoni S.J."/>
            <person name="Ferriera S."/>
            <person name="Johnson J."/>
            <person name="Cho J.C."/>
        </authorList>
    </citation>
    <scope>NUCLEOTIDE SEQUENCE [LARGE SCALE GENOMIC DNA]</scope>
    <source>
        <strain>HTCC2594</strain>
    </source>
</reference>
<name>SYP_ERYLH</name>
<feature type="chain" id="PRO_0000288409" description="Proline--tRNA ligase">
    <location>
        <begin position="1"/>
        <end position="514"/>
    </location>
</feature>
<keyword id="KW-0030">Aminoacyl-tRNA synthetase</keyword>
<keyword id="KW-0067">ATP-binding</keyword>
<keyword id="KW-0963">Cytoplasm</keyword>
<keyword id="KW-0436">Ligase</keyword>
<keyword id="KW-0547">Nucleotide-binding</keyword>
<keyword id="KW-0648">Protein biosynthesis</keyword>
<keyword id="KW-1185">Reference proteome</keyword>
<accession>Q2NAH8</accession>
<protein>
    <recommendedName>
        <fullName evidence="1">Proline--tRNA ligase</fullName>
        <ecNumber evidence="1">6.1.1.15</ecNumber>
    </recommendedName>
    <alternativeName>
        <fullName evidence="1">Prolyl-tRNA synthetase</fullName>
        <shortName evidence="1">ProRS</shortName>
    </alternativeName>
</protein>
<organism>
    <name type="scientific">Erythrobacter litoralis (strain HTCC2594)</name>
    <dbReference type="NCBI Taxonomy" id="314225"/>
    <lineage>
        <taxon>Bacteria</taxon>
        <taxon>Pseudomonadati</taxon>
        <taxon>Pseudomonadota</taxon>
        <taxon>Alphaproteobacteria</taxon>
        <taxon>Sphingomonadales</taxon>
        <taxon>Erythrobacteraceae</taxon>
        <taxon>Erythrobacter/Porphyrobacter group</taxon>
        <taxon>Erythrobacter</taxon>
    </lineage>
</organism>